<protein>
    <recommendedName>
        <fullName evidence="1">Small ribosomal subunit protein uS11</fullName>
    </recommendedName>
    <alternativeName>
        <fullName evidence="2">30S ribosomal protein S11</fullName>
    </alternativeName>
</protein>
<gene>
    <name evidence="1" type="primary">rpsK</name>
    <name type="ordered locus">Smlt0929</name>
</gene>
<evidence type="ECO:0000255" key="1">
    <source>
        <dbReference type="HAMAP-Rule" id="MF_01310"/>
    </source>
</evidence>
<evidence type="ECO:0000305" key="2"/>
<dbReference type="EMBL" id="AM743169">
    <property type="protein sequence ID" value="CAQ44497.1"/>
    <property type="molecule type" value="Genomic_DNA"/>
</dbReference>
<dbReference type="RefSeq" id="WP_004145443.1">
    <property type="nucleotide sequence ID" value="NC_010943.1"/>
</dbReference>
<dbReference type="SMR" id="B2FQK6"/>
<dbReference type="EnsemblBacteria" id="CAQ44497">
    <property type="protein sequence ID" value="CAQ44497"/>
    <property type="gene ID" value="Smlt0929"/>
</dbReference>
<dbReference type="GeneID" id="97259956"/>
<dbReference type="KEGG" id="sml:Smlt0929"/>
<dbReference type="eggNOG" id="COG0100">
    <property type="taxonomic scope" value="Bacteria"/>
</dbReference>
<dbReference type="HOGENOM" id="CLU_072439_5_0_6"/>
<dbReference type="Proteomes" id="UP000008840">
    <property type="component" value="Chromosome"/>
</dbReference>
<dbReference type="GO" id="GO:1990904">
    <property type="term" value="C:ribonucleoprotein complex"/>
    <property type="evidence" value="ECO:0007669"/>
    <property type="project" value="UniProtKB-KW"/>
</dbReference>
<dbReference type="GO" id="GO:0005840">
    <property type="term" value="C:ribosome"/>
    <property type="evidence" value="ECO:0007669"/>
    <property type="project" value="UniProtKB-KW"/>
</dbReference>
<dbReference type="GO" id="GO:0019843">
    <property type="term" value="F:rRNA binding"/>
    <property type="evidence" value="ECO:0007669"/>
    <property type="project" value="UniProtKB-UniRule"/>
</dbReference>
<dbReference type="GO" id="GO:0003735">
    <property type="term" value="F:structural constituent of ribosome"/>
    <property type="evidence" value="ECO:0007669"/>
    <property type="project" value="InterPro"/>
</dbReference>
<dbReference type="GO" id="GO:0006412">
    <property type="term" value="P:translation"/>
    <property type="evidence" value="ECO:0007669"/>
    <property type="project" value="UniProtKB-UniRule"/>
</dbReference>
<dbReference type="FunFam" id="3.30.420.80:FF:000001">
    <property type="entry name" value="30S ribosomal protein S11"/>
    <property type="match status" value="1"/>
</dbReference>
<dbReference type="Gene3D" id="3.30.420.80">
    <property type="entry name" value="Ribosomal protein S11"/>
    <property type="match status" value="1"/>
</dbReference>
<dbReference type="HAMAP" id="MF_01310">
    <property type="entry name" value="Ribosomal_uS11"/>
    <property type="match status" value="1"/>
</dbReference>
<dbReference type="InterPro" id="IPR001971">
    <property type="entry name" value="Ribosomal_uS11"/>
</dbReference>
<dbReference type="InterPro" id="IPR019981">
    <property type="entry name" value="Ribosomal_uS11_bac-type"/>
</dbReference>
<dbReference type="InterPro" id="IPR018102">
    <property type="entry name" value="Ribosomal_uS11_CS"/>
</dbReference>
<dbReference type="InterPro" id="IPR036967">
    <property type="entry name" value="Ribosomal_uS11_sf"/>
</dbReference>
<dbReference type="NCBIfam" id="NF003698">
    <property type="entry name" value="PRK05309.1"/>
    <property type="match status" value="1"/>
</dbReference>
<dbReference type="NCBIfam" id="TIGR03632">
    <property type="entry name" value="uS11_bact"/>
    <property type="match status" value="1"/>
</dbReference>
<dbReference type="PANTHER" id="PTHR11759">
    <property type="entry name" value="40S RIBOSOMAL PROTEIN S14/30S RIBOSOMAL PROTEIN S11"/>
    <property type="match status" value="1"/>
</dbReference>
<dbReference type="Pfam" id="PF00411">
    <property type="entry name" value="Ribosomal_S11"/>
    <property type="match status" value="1"/>
</dbReference>
<dbReference type="PIRSF" id="PIRSF002131">
    <property type="entry name" value="Ribosomal_S11"/>
    <property type="match status" value="1"/>
</dbReference>
<dbReference type="SUPFAM" id="SSF53137">
    <property type="entry name" value="Translational machinery components"/>
    <property type="match status" value="1"/>
</dbReference>
<dbReference type="PROSITE" id="PS00054">
    <property type="entry name" value="RIBOSOMAL_S11"/>
    <property type="match status" value="1"/>
</dbReference>
<accession>B2FQK6</accession>
<proteinExistence type="inferred from homology"/>
<comment type="function">
    <text evidence="1">Located on the platform of the 30S subunit, it bridges several disparate RNA helices of the 16S rRNA. Forms part of the Shine-Dalgarno cleft in the 70S ribosome.</text>
</comment>
<comment type="subunit">
    <text evidence="1">Part of the 30S ribosomal subunit. Interacts with proteins S7 and S18. Binds to IF-3.</text>
</comment>
<comment type="similarity">
    <text evidence="1">Belongs to the universal ribosomal protein uS11 family.</text>
</comment>
<organism>
    <name type="scientific">Stenotrophomonas maltophilia (strain K279a)</name>
    <dbReference type="NCBI Taxonomy" id="522373"/>
    <lineage>
        <taxon>Bacteria</taxon>
        <taxon>Pseudomonadati</taxon>
        <taxon>Pseudomonadota</taxon>
        <taxon>Gammaproteobacteria</taxon>
        <taxon>Lysobacterales</taxon>
        <taxon>Lysobacteraceae</taxon>
        <taxon>Stenotrophomonas</taxon>
        <taxon>Stenotrophomonas maltophilia group</taxon>
    </lineage>
</organism>
<feature type="chain" id="PRO_1000141145" description="Small ribosomal subunit protein uS11">
    <location>
        <begin position="1"/>
        <end position="129"/>
    </location>
</feature>
<keyword id="KW-1185">Reference proteome</keyword>
<keyword id="KW-0687">Ribonucleoprotein</keyword>
<keyword id="KW-0689">Ribosomal protein</keyword>
<keyword id="KW-0694">RNA-binding</keyword>
<keyword id="KW-0699">rRNA-binding</keyword>
<sequence>MAKPAAKTKKKIKRVVTDGVAHVHASFNNTIVTITDRQGNALSWATSGGAGFRGSRKSTPFAAQVAAEKAGRAALDYGVKSLEVRIKGPGPGRESAVRSLNNVGYKITNIIDVTPIPHNGCRPPKKRRV</sequence>
<reference key="1">
    <citation type="journal article" date="2008" name="Genome Biol.">
        <title>The complete genome, comparative and functional analysis of Stenotrophomonas maltophilia reveals an organism heavily shielded by drug resistance determinants.</title>
        <authorList>
            <person name="Crossman L.C."/>
            <person name="Gould V.C."/>
            <person name="Dow J.M."/>
            <person name="Vernikos G.S."/>
            <person name="Okazaki A."/>
            <person name="Sebaihia M."/>
            <person name="Saunders D."/>
            <person name="Arrowsmith C."/>
            <person name="Carver T."/>
            <person name="Peters N."/>
            <person name="Adlem E."/>
            <person name="Kerhornou A."/>
            <person name="Lord A."/>
            <person name="Murphy L."/>
            <person name="Seeger K."/>
            <person name="Squares R."/>
            <person name="Rutter S."/>
            <person name="Quail M.A."/>
            <person name="Rajandream M.A."/>
            <person name="Harris D."/>
            <person name="Churcher C."/>
            <person name="Bentley S.D."/>
            <person name="Parkhill J."/>
            <person name="Thomson N.R."/>
            <person name="Avison M.B."/>
        </authorList>
    </citation>
    <scope>NUCLEOTIDE SEQUENCE [LARGE SCALE GENOMIC DNA]</scope>
    <source>
        <strain>K279a</strain>
    </source>
</reference>
<name>RS11_STRMK</name>